<proteinExistence type="evidence at protein level"/>
<feature type="signal peptide" evidence="1">
    <location>
        <begin position="1"/>
        <end position="27"/>
    </location>
</feature>
<feature type="chain" id="PRO_0000026530" description="GPI-anchor transamidase">
    <location>
        <begin position="28"/>
        <end position="395"/>
    </location>
</feature>
<feature type="topological domain" description="Lumenal" evidence="1">
    <location>
        <begin position="28"/>
        <end position="368"/>
    </location>
</feature>
<feature type="transmembrane region" description="Helical" evidence="1">
    <location>
        <begin position="369"/>
        <end position="385"/>
    </location>
</feature>
<feature type="topological domain" description="Cytoplasmic" evidence="1">
    <location>
        <begin position="386"/>
        <end position="395"/>
    </location>
</feature>
<feature type="region of interest" description="Autoinhibitory loop" evidence="1">
    <location>
        <begin position="231"/>
        <end position="236"/>
    </location>
</feature>
<feature type="active site" description="Proton donor" evidence="1">
    <location>
        <position position="164"/>
    </location>
</feature>
<feature type="active site" description="Nucleophile; acyl-thioester intermediate" evidence="1">
    <location>
        <position position="206"/>
    </location>
</feature>
<feature type="binding site" evidence="1">
    <location>
        <position position="79"/>
    </location>
    <ligand>
        <name>Ca(2+)</name>
        <dbReference type="ChEBI" id="CHEBI:29108"/>
    </ligand>
</feature>
<feature type="binding site" evidence="1">
    <location>
        <position position="82"/>
    </location>
    <ligand>
        <name>Ca(2+)</name>
        <dbReference type="ChEBI" id="CHEBI:29108"/>
    </ligand>
</feature>
<feature type="binding site" evidence="1">
    <location>
        <position position="118"/>
    </location>
    <ligand>
        <name>Ca(2+)</name>
        <dbReference type="ChEBI" id="CHEBI:29108"/>
    </ligand>
</feature>
<feature type="binding site" evidence="1">
    <location>
        <position position="120"/>
    </location>
    <ligand>
        <name>Ca(2+)</name>
        <dbReference type="ChEBI" id="CHEBI:29108"/>
    </ligand>
</feature>
<feature type="binding site" evidence="1">
    <location>
        <position position="206"/>
    </location>
    <ligand>
        <name>a protein</name>
        <dbReference type="ChEBI" id="CHEBI:16541"/>
    </ligand>
    <ligandPart>
        <name>GPI-anchor amidated serine</name>
    </ligandPart>
</feature>
<feature type="binding site" evidence="1">
    <location>
        <position position="232"/>
    </location>
    <ligand>
        <name>a protein</name>
        <dbReference type="ChEBI" id="CHEBI:16541"/>
    </ligand>
    <ligandPart>
        <name>GPI-anchor amidated serine</name>
    </ligandPart>
</feature>
<feature type="binding site" evidence="1">
    <location>
        <position position="234"/>
    </location>
    <ligand>
        <name>a protein</name>
        <dbReference type="ChEBI" id="CHEBI:16541"/>
    </ligand>
    <ligandPart>
        <name>L-serine residue</name>
        <dbReference type="ChEBI" id="CHEBI:29999"/>
    </ligandPart>
</feature>
<feature type="disulfide bond" description="Interchain (with C-182 in PIGT)" evidence="1">
    <location>
        <position position="92"/>
    </location>
</feature>
<feature type="disulfide bond" evidence="1">
    <location>
        <begin position="275"/>
        <end position="280"/>
    </location>
</feature>
<feature type="sequence conflict" description="In Ref. 1; BAB29018." evidence="2" ref="1">
    <original>EV</original>
    <variation>RG</variation>
    <location>
        <begin position="125"/>
        <end position="126"/>
    </location>
</feature>
<feature type="sequence conflict" description="In Ref. 1; BAB29018." evidence="2" ref="1">
    <original>R</original>
    <variation>E</variation>
    <location>
        <position position="138"/>
    </location>
</feature>
<feature type="sequence conflict" description="In Ref. 1; BAB29018." evidence="2" ref="1">
    <original>R</original>
    <variation>K</variation>
    <location>
        <position position="154"/>
    </location>
</feature>
<feature type="sequence conflict" description="In Ref. 1; BAB29018." evidence="2" ref="1">
    <original>LE</original>
    <variation>WK</variation>
    <location>
        <begin position="257"/>
        <end position="258"/>
    </location>
</feature>
<protein>
    <recommendedName>
        <fullName evidence="2">GPI-anchor transamidase</fullName>
        <ecNumber evidence="1">2.6.1.-</ecNumber>
    </recommendedName>
    <alternativeName>
        <fullName>GPI-anchor transamidase component PIGK</fullName>
    </alternativeName>
    <alternativeName>
        <fullName>Phosphatidylinositol-glycan biosynthesis class K protein</fullName>
        <shortName>PIG-K</shortName>
    </alternativeName>
</protein>
<name>GPI8_MOUSE</name>
<organism>
    <name type="scientific">Mus musculus</name>
    <name type="common">Mouse</name>
    <dbReference type="NCBI Taxonomy" id="10090"/>
    <lineage>
        <taxon>Eukaryota</taxon>
        <taxon>Metazoa</taxon>
        <taxon>Chordata</taxon>
        <taxon>Craniata</taxon>
        <taxon>Vertebrata</taxon>
        <taxon>Euteleostomi</taxon>
        <taxon>Mammalia</taxon>
        <taxon>Eutheria</taxon>
        <taxon>Euarchontoglires</taxon>
        <taxon>Glires</taxon>
        <taxon>Rodentia</taxon>
        <taxon>Myomorpha</taxon>
        <taxon>Muroidea</taxon>
        <taxon>Muridae</taxon>
        <taxon>Murinae</taxon>
        <taxon>Mus</taxon>
        <taxon>Mus</taxon>
    </lineage>
</organism>
<accession>Q9CXY9</accession>
<accession>Q8BH63</accession>
<reference key="1">
    <citation type="journal article" date="2005" name="Science">
        <title>The transcriptional landscape of the mammalian genome.</title>
        <authorList>
            <person name="Carninci P."/>
            <person name="Kasukawa T."/>
            <person name="Katayama S."/>
            <person name="Gough J."/>
            <person name="Frith M.C."/>
            <person name="Maeda N."/>
            <person name="Oyama R."/>
            <person name="Ravasi T."/>
            <person name="Lenhard B."/>
            <person name="Wells C."/>
            <person name="Kodzius R."/>
            <person name="Shimokawa K."/>
            <person name="Bajic V.B."/>
            <person name="Brenner S.E."/>
            <person name="Batalov S."/>
            <person name="Forrest A.R."/>
            <person name="Zavolan M."/>
            <person name="Davis M.J."/>
            <person name="Wilming L.G."/>
            <person name="Aidinis V."/>
            <person name="Allen J.E."/>
            <person name="Ambesi-Impiombato A."/>
            <person name="Apweiler R."/>
            <person name="Aturaliya R.N."/>
            <person name="Bailey T.L."/>
            <person name="Bansal M."/>
            <person name="Baxter L."/>
            <person name="Beisel K.W."/>
            <person name="Bersano T."/>
            <person name="Bono H."/>
            <person name="Chalk A.M."/>
            <person name="Chiu K.P."/>
            <person name="Choudhary V."/>
            <person name="Christoffels A."/>
            <person name="Clutterbuck D.R."/>
            <person name="Crowe M.L."/>
            <person name="Dalla E."/>
            <person name="Dalrymple B.P."/>
            <person name="de Bono B."/>
            <person name="Della Gatta G."/>
            <person name="di Bernardo D."/>
            <person name="Down T."/>
            <person name="Engstrom P."/>
            <person name="Fagiolini M."/>
            <person name="Faulkner G."/>
            <person name="Fletcher C.F."/>
            <person name="Fukushima T."/>
            <person name="Furuno M."/>
            <person name="Futaki S."/>
            <person name="Gariboldi M."/>
            <person name="Georgii-Hemming P."/>
            <person name="Gingeras T.R."/>
            <person name="Gojobori T."/>
            <person name="Green R.E."/>
            <person name="Gustincich S."/>
            <person name="Harbers M."/>
            <person name="Hayashi Y."/>
            <person name="Hensch T.K."/>
            <person name="Hirokawa N."/>
            <person name="Hill D."/>
            <person name="Huminiecki L."/>
            <person name="Iacono M."/>
            <person name="Ikeo K."/>
            <person name="Iwama A."/>
            <person name="Ishikawa T."/>
            <person name="Jakt M."/>
            <person name="Kanapin A."/>
            <person name="Katoh M."/>
            <person name="Kawasawa Y."/>
            <person name="Kelso J."/>
            <person name="Kitamura H."/>
            <person name="Kitano H."/>
            <person name="Kollias G."/>
            <person name="Krishnan S.P."/>
            <person name="Kruger A."/>
            <person name="Kummerfeld S.K."/>
            <person name="Kurochkin I.V."/>
            <person name="Lareau L.F."/>
            <person name="Lazarevic D."/>
            <person name="Lipovich L."/>
            <person name="Liu J."/>
            <person name="Liuni S."/>
            <person name="McWilliam S."/>
            <person name="Madan Babu M."/>
            <person name="Madera M."/>
            <person name="Marchionni L."/>
            <person name="Matsuda H."/>
            <person name="Matsuzawa S."/>
            <person name="Miki H."/>
            <person name="Mignone F."/>
            <person name="Miyake S."/>
            <person name="Morris K."/>
            <person name="Mottagui-Tabar S."/>
            <person name="Mulder N."/>
            <person name="Nakano N."/>
            <person name="Nakauchi H."/>
            <person name="Ng P."/>
            <person name="Nilsson R."/>
            <person name="Nishiguchi S."/>
            <person name="Nishikawa S."/>
            <person name="Nori F."/>
            <person name="Ohara O."/>
            <person name="Okazaki Y."/>
            <person name="Orlando V."/>
            <person name="Pang K.C."/>
            <person name="Pavan W.J."/>
            <person name="Pavesi G."/>
            <person name="Pesole G."/>
            <person name="Petrovsky N."/>
            <person name="Piazza S."/>
            <person name="Reed J."/>
            <person name="Reid J.F."/>
            <person name="Ring B.Z."/>
            <person name="Ringwald M."/>
            <person name="Rost B."/>
            <person name="Ruan Y."/>
            <person name="Salzberg S.L."/>
            <person name="Sandelin A."/>
            <person name="Schneider C."/>
            <person name="Schoenbach C."/>
            <person name="Sekiguchi K."/>
            <person name="Semple C.A."/>
            <person name="Seno S."/>
            <person name="Sessa L."/>
            <person name="Sheng Y."/>
            <person name="Shibata Y."/>
            <person name="Shimada H."/>
            <person name="Shimada K."/>
            <person name="Silva D."/>
            <person name="Sinclair B."/>
            <person name="Sperling S."/>
            <person name="Stupka E."/>
            <person name="Sugiura K."/>
            <person name="Sultana R."/>
            <person name="Takenaka Y."/>
            <person name="Taki K."/>
            <person name="Tammoja K."/>
            <person name="Tan S.L."/>
            <person name="Tang S."/>
            <person name="Taylor M.S."/>
            <person name="Tegner J."/>
            <person name="Teichmann S.A."/>
            <person name="Ueda H.R."/>
            <person name="van Nimwegen E."/>
            <person name="Verardo R."/>
            <person name="Wei C.L."/>
            <person name="Yagi K."/>
            <person name="Yamanishi H."/>
            <person name="Zabarovsky E."/>
            <person name="Zhu S."/>
            <person name="Zimmer A."/>
            <person name="Hide W."/>
            <person name="Bult C."/>
            <person name="Grimmond S.M."/>
            <person name="Teasdale R.D."/>
            <person name="Liu E.T."/>
            <person name="Brusic V."/>
            <person name="Quackenbush J."/>
            <person name="Wahlestedt C."/>
            <person name="Mattick J.S."/>
            <person name="Hume D.A."/>
            <person name="Kai C."/>
            <person name="Sasaki D."/>
            <person name="Tomaru Y."/>
            <person name="Fukuda S."/>
            <person name="Kanamori-Katayama M."/>
            <person name="Suzuki M."/>
            <person name="Aoki J."/>
            <person name="Arakawa T."/>
            <person name="Iida J."/>
            <person name="Imamura K."/>
            <person name="Itoh M."/>
            <person name="Kato T."/>
            <person name="Kawaji H."/>
            <person name="Kawagashira N."/>
            <person name="Kawashima T."/>
            <person name="Kojima M."/>
            <person name="Kondo S."/>
            <person name="Konno H."/>
            <person name="Nakano K."/>
            <person name="Ninomiya N."/>
            <person name="Nishio T."/>
            <person name="Okada M."/>
            <person name="Plessy C."/>
            <person name="Shibata K."/>
            <person name="Shiraki T."/>
            <person name="Suzuki S."/>
            <person name="Tagami M."/>
            <person name="Waki K."/>
            <person name="Watahiki A."/>
            <person name="Okamura-Oho Y."/>
            <person name="Suzuki H."/>
            <person name="Kawai J."/>
            <person name="Hayashizaki Y."/>
        </authorList>
    </citation>
    <scope>NUCLEOTIDE SEQUENCE [LARGE SCALE MRNA]</scope>
    <source>
        <strain>C57BL/6J</strain>
        <tissue>Embryonic head</tissue>
        <tissue>Testis</tissue>
    </source>
</reference>
<reference key="2">
    <citation type="journal article" date="2004" name="Genome Res.">
        <title>The status, quality, and expansion of the NIH full-length cDNA project: the Mammalian Gene Collection (MGC).</title>
        <authorList>
            <consortium name="The MGC Project Team"/>
        </authorList>
    </citation>
    <scope>NUCLEOTIDE SEQUENCE [LARGE SCALE MRNA]</scope>
    <source>
        <strain>C57BL/6J</strain>
        <tissue>Brain</tissue>
    </source>
</reference>
<reference key="3">
    <citation type="journal article" date="2010" name="Cell">
        <title>A tissue-specific atlas of mouse protein phosphorylation and expression.</title>
        <authorList>
            <person name="Huttlin E.L."/>
            <person name="Jedrychowski M.P."/>
            <person name="Elias J.E."/>
            <person name="Goswami T."/>
            <person name="Rad R."/>
            <person name="Beausoleil S.A."/>
            <person name="Villen J."/>
            <person name="Haas W."/>
            <person name="Sowa M.E."/>
            <person name="Gygi S.P."/>
        </authorList>
    </citation>
    <scope>IDENTIFICATION BY MASS SPECTROMETRY [LARGE SCALE ANALYSIS]</scope>
    <source>
        <tissue>Brain</tissue>
        <tissue>Kidney</tissue>
        <tissue>Liver</tissue>
        <tissue>Lung</tissue>
        <tissue>Pancreas</tissue>
        <tissue>Spleen</tissue>
        <tissue>Testis</tissue>
    </source>
</reference>
<evidence type="ECO:0000250" key="1">
    <source>
        <dbReference type="UniProtKB" id="Q92643"/>
    </source>
</evidence>
<evidence type="ECO:0000305" key="2"/>
<evidence type="ECO:0000312" key="3">
    <source>
        <dbReference type="MGI" id="MGI:1913863"/>
    </source>
</evidence>
<keyword id="KW-0106">Calcium</keyword>
<keyword id="KW-1015">Disulfide bond</keyword>
<keyword id="KW-0256">Endoplasmic reticulum</keyword>
<keyword id="KW-0337">GPI-anchor biosynthesis</keyword>
<keyword id="KW-0472">Membrane</keyword>
<keyword id="KW-0479">Metal-binding</keyword>
<keyword id="KW-1185">Reference proteome</keyword>
<keyword id="KW-0732">Signal</keyword>
<keyword id="KW-0808">Transferase</keyword>
<keyword id="KW-0812">Transmembrane</keyword>
<keyword id="KW-1133">Transmembrane helix</keyword>
<comment type="function">
    <text evidence="1">Catalytic subunit of the glycosylphosphatidylinositol-anchor (GPI-anchor) transamidase (GPI-T) complex that catalyzes the formation of the linkage between a proprotein and a GPI-anchor and participates in GPI anchored protein biosynthesis. Recognizes diverse proproteins at a C-terminal signal peptide (CSP) region that lacks consensus sequence and replaces it with a GPI-anchor via a transamidation reaction. Transamidation catalysis reaction follows a two-phase mechanism. In the acyl-enzyme phase, the carbonyl group of the proproteins's omega-site undergoes a nucleophilic attack forming an enzyme-substrate thioester bond. Followed by a general acid catalysis that allows CSP releasing, regenerating the carbonyl, and forming the acyl-enzyme intermediate. In the GPI-anchor attachment phase, the amino group of the GPI-anchor's ethanolamine phosphate, the one on third mannose (EtNP3), mediates a nucleophilic attack on the carbonyl of the acyl-enzyme intermediate, replacing the CSP, allowing GPI-anchor attachment to the omega-residue, therefore forming the product and freeing the enzyme.</text>
</comment>
<comment type="activity regulation">
    <text evidence="1">In the absence of proproteins substrates, exists in an inactive state with a disrupted catalytic site by an autoinhibitory loop. The binding of proprotein substrates, particularly the CSP region, to GPI-T triggers concerted conformational changes that alleviate the inhibition by the autoinhibitory loop. Meanwhile, proprotein residues near the omega- site induce the formation of a catalytic cleft for catalysis, following which the products are released and GPI-T reverts to the inactive state.</text>
</comment>
<comment type="pathway">
    <text evidence="1">Glycolipid biosynthesis; glycosylphosphatidylinositol-anchor biosynthesis.</text>
</comment>
<comment type="subunit">
    <text evidence="1">Heteropentamer. Part of the GPI-anchor transamidase complex, consisting of PIGK, PIGT, PIGS, PIGU and GAA1. Interacts with GPAA1. Interacts with PIGT; this interaction, via a disulfide link, stabilizes the expression of GAA1 and PIGK and links them to PIGS.</text>
</comment>
<comment type="subcellular location">
    <subcellularLocation>
        <location evidence="1">Endoplasmic reticulum membrane</location>
        <topology evidence="1">Single-pass type I membrane protein</topology>
    </subcellularLocation>
</comment>
<comment type="PTM">
    <text evidence="1">The disulfide bond between PIGK/GPI8 and PIGT is important for normal enzyme activity.</text>
</comment>
<comment type="similarity">
    <text evidence="2">Belongs to the peptidase C13 family.</text>
</comment>
<dbReference type="EC" id="2.6.1.-" evidence="1"/>
<dbReference type="EMBL" id="AK013853">
    <property type="protein sequence ID" value="BAB29018.1"/>
    <property type="molecule type" value="mRNA"/>
</dbReference>
<dbReference type="EMBL" id="AK077893">
    <property type="protein sequence ID" value="BAC37051.1"/>
    <property type="molecule type" value="mRNA"/>
</dbReference>
<dbReference type="EMBL" id="AK082806">
    <property type="protein sequence ID" value="BAC38629.1"/>
    <property type="molecule type" value="mRNA"/>
</dbReference>
<dbReference type="EMBL" id="BC060175">
    <property type="protein sequence ID" value="AAH60175.1"/>
    <property type="molecule type" value="mRNA"/>
</dbReference>
<dbReference type="CCDS" id="CCDS17919.1"/>
<dbReference type="RefSeq" id="NP_079938.1">
    <property type="nucleotide sequence ID" value="NM_025662.5"/>
</dbReference>
<dbReference type="RefSeq" id="NP_821135.1">
    <property type="nucleotide sequence ID" value="NM_178016.3"/>
</dbReference>
<dbReference type="SMR" id="Q9CXY9"/>
<dbReference type="BioGRID" id="236834">
    <property type="interactions" value="6"/>
</dbReference>
<dbReference type="FunCoup" id="Q9CXY9">
    <property type="interactions" value="1334"/>
</dbReference>
<dbReference type="STRING" id="10090.ENSMUSP00000045351"/>
<dbReference type="MEROPS" id="C13.005"/>
<dbReference type="GlyGen" id="Q9CXY9">
    <property type="glycosylation" value="1 site, 1 O-linked glycan (1 site)"/>
</dbReference>
<dbReference type="iPTMnet" id="Q9CXY9"/>
<dbReference type="PhosphoSitePlus" id="Q9CXY9"/>
<dbReference type="SwissPalm" id="Q9CXY9"/>
<dbReference type="jPOST" id="Q9CXY9"/>
<dbReference type="PeptideAtlas" id="Q9CXY9"/>
<dbReference type="ProteomicsDB" id="267760"/>
<dbReference type="Pumba" id="Q9CXY9"/>
<dbReference type="Antibodypedia" id="33483">
    <property type="antibodies" value="176 antibodies from 22 providers"/>
</dbReference>
<dbReference type="DNASU" id="329777"/>
<dbReference type="Ensembl" id="ENSMUST00000159899.8">
    <property type="protein sequence ID" value="ENSMUSP00000123772.2"/>
    <property type="gene ID" value="ENSMUSG00000039047.18"/>
</dbReference>
<dbReference type="GeneID" id="329777"/>
<dbReference type="KEGG" id="mmu:329777"/>
<dbReference type="UCSC" id="uc012czo.1">
    <property type="organism name" value="mouse"/>
</dbReference>
<dbReference type="AGR" id="MGI:1913863"/>
<dbReference type="CTD" id="10026"/>
<dbReference type="MGI" id="MGI:1913863">
    <property type="gene designation" value="Pigk"/>
</dbReference>
<dbReference type="VEuPathDB" id="HostDB:ENSMUSG00000039047"/>
<dbReference type="GeneTree" id="ENSGT00940000156273"/>
<dbReference type="HOGENOM" id="CLU_044656_1_0_1"/>
<dbReference type="InParanoid" id="Q9CXY9"/>
<dbReference type="OrthoDB" id="192611at2759"/>
<dbReference type="Reactome" id="R-MMU-162791">
    <property type="pathway name" value="Attachment of GPI anchor to uPAR"/>
</dbReference>
<dbReference type="UniPathway" id="UPA00196"/>
<dbReference type="BioGRID-ORCS" id="329777">
    <property type="hits" value="13 hits in 79 CRISPR screens"/>
</dbReference>
<dbReference type="ChiTaRS" id="Pigk">
    <property type="organism name" value="mouse"/>
</dbReference>
<dbReference type="PRO" id="PR:Q9CXY9"/>
<dbReference type="Proteomes" id="UP000000589">
    <property type="component" value="Chromosome 3"/>
</dbReference>
<dbReference type="RNAct" id="Q9CXY9">
    <property type="molecule type" value="protein"/>
</dbReference>
<dbReference type="Bgee" id="ENSMUSG00000039047">
    <property type="expression patterns" value="Expressed in spermatocyte and 262 other cell types or tissues"/>
</dbReference>
<dbReference type="ExpressionAtlas" id="Q9CXY9">
    <property type="expression patterns" value="baseline and differential"/>
</dbReference>
<dbReference type="GO" id="GO:0042765">
    <property type="term" value="C:GPI-anchor transamidase complex"/>
    <property type="evidence" value="ECO:0000250"/>
    <property type="project" value="UniProtKB"/>
</dbReference>
<dbReference type="GO" id="GO:0003923">
    <property type="term" value="F:GPI-anchor transamidase activity"/>
    <property type="evidence" value="ECO:0000250"/>
    <property type="project" value="UniProtKB"/>
</dbReference>
<dbReference type="GO" id="GO:0016255">
    <property type="term" value="P:attachment of GPI anchor to protein"/>
    <property type="evidence" value="ECO:0000250"/>
    <property type="project" value="UniProtKB"/>
</dbReference>
<dbReference type="GO" id="GO:0006506">
    <property type="term" value="P:GPI anchor biosynthetic process"/>
    <property type="evidence" value="ECO:0007669"/>
    <property type="project" value="UniProtKB-UniPathway"/>
</dbReference>
<dbReference type="GO" id="GO:0006508">
    <property type="term" value="P:proteolysis"/>
    <property type="evidence" value="ECO:0007669"/>
    <property type="project" value="UniProtKB-KW"/>
</dbReference>
<dbReference type="FunFam" id="3.40.50.1460:FF:000002">
    <property type="entry name" value="GPI-anchor transamidase"/>
    <property type="match status" value="1"/>
</dbReference>
<dbReference type="Gene3D" id="3.40.50.1460">
    <property type="match status" value="1"/>
</dbReference>
<dbReference type="InterPro" id="IPR028361">
    <property type="entry name" value="GPI_transamidase"/>
</dbReference>
<dbReference type="InterPro" id="IPR001096">
    <property type="entry name" value="Peptidase_C13"/>
</dbReference>
<dbReference type="PANTHER" id="PTHR48067">
    <property type="entry name" value="GPI-ANCHOR TRANSAMIDASE"/>
    <property type="match status" value="1"/>
</dbReference>
<dbReference type="PANTHER" id="PTHR48067:SF1">
    <property type="entry name" value="GPI-ANCHOR TRANSAMIDASE"/>
    <property type="match status" value="1"/>
</dbReference>
<dbReference type="Pfam" id="PF01650">
    <property type="entry name" value="Peptidase_C13"/>
    <property type="match status" value="1"/>
</dbReference>
<dbReference type="PIRSF" id="PIRSF500138">
    <property type="entry name" value="GPI8"/>
    <property type="match status" value="1"/>
</dbReference>
<dbReference type="PIRSF" id="PIRSF019663">
    <property type="entry name" value="Legumain"/>
    <property type="match status" value="1"/>
</dbReference>
<dbReference type="PRINTS" id="PR00776">
    <property type="entry name" value="HEMOGLOBNASE"/>
</dbReference>
<sequence>MAAPCFLTLRVATLAALALLSLGSSAAGHIEDQAEQFFRSGHTNNWAVLVCTSRFWFNYRHVANTLSVYRSVKRLGIPDSHIVLMLADDMACNARNPKPATVFSHKNMELNVYGDDVEVDYRSYEVTVENFLRVLTGRVPPSTPRSKRLLSDDRSNILIYMTGHGGNGFLKFQDSEEITNIELADAFEQMWQKRRYNELLFIIDTCQGASMYERFYSPNIMALASSQVGEDSLSHQPDPAIGVHLMDRYTFYVLEFLEEINPASQTNMNDLFQVCPKSLCVSTPGHRTDLFQRDPKNVLITDFFGSVRKVEITTEKISLQWDSQVVDSSSKEDGTAEERMGPLKYAEQLPVAQIIHQKPKPRDWHPPGGFILGLWALIIMVFFKTYGIKHMKFIF</sequence>
<gene>
    <name evidence="3" type="primary">Pigk</name>
</gene>